<feature type="chain" id="PRO_1000127731" description="Glucokinase">
    <location>
        <begin position="1"/>
        <end position="323"/>
    </location>
</feature>
<feature type="binding site" evidence="1">
    <location>
        <begin position="8"/>
        <end position="13"/>
    </location>
    <ligand>
        <name>ATP</name>
        <dbReference type="ChEBI" id="CHEBI:30616"/>
    </ligand>
</feature>
<keyword id="KW-0067">ATP-binding</keyword>
<keyword id="KW-0963">Cytoplasm</keyword>
<keyword id="KW-0324">Glycolysis</keyword>
<keyword id="KW-0418">Kinase</keyword>
<keyword id="KW-0547">Nucleotide-binding</keyword>
<keyword id="KW-0808">Transferase</keyword>
<organism>
    <name type="scientific">Yersinia pseudotuberculosis serotype IB (strain PB1/+)</name>
    <dbReference type="NCBI Taxonomy" id="502801"/>
    <lineage>
        <taxon>Bacteria</taxon>
        <taxon>Pseudomonadati</taxon>
        <taxon>Pseudomonadota</taxon>
        <taxon>Gammaproteobacteria</taxon>
        <taxon>Enterobacterales</taxon>
        <taxon>Yersiniaceae</taxon>
        <taxon>Yersinia</taxon>
    </lineage>
</organism>
<gene>
    <name evidence="1" type="primary">glk</name>
    <name type="ordered locus">YPTS_2799</name>
</gene>
<name>GLK_YERPB</name>
<dbReference type="EC" id="2.7.1.2" evidence="1"/>
<dbReference type="EMBL" id="CP001048">
    <property type="protein sequence ID" value="ACC89757.1"/>
    <property type="molecule type" value="Genomic_DNA"/>
</dbReference>
<dbReference type="RefSeq" id="WP_002211615.1">
    <property type="nucleotide sequence ID" value="NZ_CP009780.1"/>
</dbReference>
<dbReference type="SMR" id="B2K906"/>
<dbReference type="GeneID" id="57975727"/>
<dbReference type="KEGG" id="ypb:YPTS_2799"/>
<dbReference type="PATRIC" id="fig|502801.10.peg.2226"/>
<dbReference type="GO" id="GO:0005829">
    <property type="term" value="C:cytosol"/>
    <property type="evidence" value="ECO:0007669"/>
    <property type="project" value="TreeGrafter"/>
</dbReference>
<dbReference type="GO" id="GO:0005524">
    <property type="term" value="F:ATP binding"/>
    <property type="evidence" value="ECO:0007669"/>
    <property type="project" value="UniProtKB-UniRule"/>
</dbReference>
<dbReference type="GO" id="GO:0005536">
    <property type="term" value="F:D-glucose binding"/>
    <property type="evidence" value="ECO:0007669"/>
    <property type="project" value="InterPro"/>
</dbReference>
<dbReference type="GO" id="GO:0004340">
    <property type="term" value="F:glucokinase activity"/>
    <property type="evidence" value="ECO:0007669"/>
    <property type="project" value="UniProtKB-UniRule"/>
</dbReference>
<dbReference type="GO" id="GO:0006096">
    <property type="term" value="P:glycolytic process"/>
    <property type="evidence" value="ECO:0007669"/>
    <property type="project" value="UniProtKB-UniRule"/>
</dbReference>
<dbReference type="CDD" id="cd24008">
    <property type="entry name" value="ASKHA_NBD_GLK"/>
    <property type="match status" value="1"/>
</dbReference>
<dbReference type="FunFam" id="3.30.420.40:FF:000045">
    <property type="entry name" value="Glucokinase"/>
    <property type="match status" value="1"/>
</dbReference>
<dbReference type="FunFam" id="3.40.367.20:FF:000002">
    <property type="entry name" value="Glucokinase"/>
    <property type="match status" value="1"/>
</dbReference>
<dbReference type="Gene3D" id="3.30.420.40">
    <property type="match status" value="1"/>
</dbReference>
<dbReference type="Gene3D" id="3.40.367.20">
    <property type="match status" value="1"/>
</dbReference>
<dbReference type="HAMAP" id="MF_00524">
    <property type="entry name" value="Glucokinase"/>
    <property type="match status" value="1"/>
</dbReference>
<dbReference type="InterPro" id="IPR043129">
    <property type="entry name" value="ATPase_NBD"/>
</dbReference>
<dbReference type="InterPro" id="IPR050201">
    <property type="entry name" value="Bacterial_glucokinase"/>
</dbReference>
<dbReference type="InterPro" id="IPR003836">
    <property type="entry name" value="Glucokinase"/>
</dbReference>
<dbReference type="NCBIfam" id="TIGR00749">
    <property type="entry name" value="glk"/>
    <property type="match status" value="1"/>
</dbReference>
<dbReference type="NCBIfam" id="NF001414">
    <property type="entry name" value="PRK00292.1-1"/>
    <property type="match status" value="1"/>
</dbReference>
<dbReference type="NCBIfam" id="NF001416">
    <property type="entry name" value="PRK00292.1-3"/>
    <property type="match status" value="1"/>
</dbReference>
<dbReference type="NCBIfam" id="NF009073">
    <property type="entry name" value="PRK12408.1"/>
    <property type="match status" value="1"/>
</dbReference>
<dbReference type="PANTHER" id="PTHR47690">
    <property type="entry name" value="GLUCOKINASE"/>
    <property type="match status" value="1"/>
</dbReference>
<dbReference type="PANTHER" id="PTHR47690:SF1">
    <property type="entry name" value="GLUCOKINASE"/>
    <property type="match status" value="1"/>
</dbReference>
<dbReference type="Pfam" id="PF02685">
    <property type="entry name" value="Glucokinase"/>
    <property type="match status" value="1"/>
</dbReference>
<dbReference type="SUPFAM" id="SSF53067">
    <property type="entry name" value="Actin-like ATPase domain"/>
    <property type="match status" value="1"/>
</dbReference>
<comment type="catalytic activity">
    <reaction evidence="1">
        <text>D-glucose + ATP = D-glucose 6-phosphate + ADP + H(+)</text>
        <dbReference type="Rhea" id="RHEA:17825"/>
        <dbReference type="ChEBI" id="CHEBI:4167"/>
        <dbReference type="ChEBI" id="CHEBI:15378"/>
        <dbReference type="ChEBI" id="CHEBI:30616"/>
        <dbReference type="ChEBI" id="CHEBI:61548"/>
        <dbReference type="ChEBI" id="CHEBI:456216"/>
        <dbReference type="EC" id="2.7.1.2"/>
    </reaction>
</comment>
<comment type="subcellular location">
    <subcellularLocation>
        <location evidence="1">Cytoplasm</location>
    </subcellularLocation>
</comment>
<comment type="similarity">
    <text evidence="1">Belongs to the bacterial glucokinase family.</text>
</comment>
<protein>
    <recommendedName>
        <fullName evidence="1">Glucokinase</fullName>
        <ecNumber evidence="1">2.7.1.2</ecNumber>
    </recommendedName>
    <alternativeName>
        <fullName evidence="1">Glucose kinase</fullName>
    </alternativeName>
</protein>
<evidence type="ECO:0000255" key="1">
    <source>
        <dbReference type="HAMAP-Rule" id="MF_00524"/>
    </source>
</evidence>
<reference key="1">
    <citation type="submission" date="2008-04" db="EMBL/GenBank/DDBJ databases">
        <title>Complete sequence of Yersinia pseudotuberculosis PB1/+.</title>
        <authorList>
            <person name="Copeland A."/>
            <person name="Lucas S."/>
            <person name="Lapidus A."/>
            <person name="Glavina del Rio T."/>
            <person name="Dalin E."/>
            <person name="Tice H."/>
            <person name="Bruce D."/>
            <person name="Goodwin L."/>
            <person name="Pitluck S."/>
            <person name="Munk A.C."/>
            <person name="Brettin T."/>
            <person name="Detter J.C."/>
            <person name="Han C."/>
            <person name="Tapia R."/>
            <person name="Schmutz J."/>
            <person name="Larimer F."/>
            <person name="Land M."/>
            <person name="Hauser L."/>
            <person name="Challacombe J.F."/>
            <person name="Green L."/>
            <person name="Lindler L.E."/>
            <person name="Nikolich M.P."/>
            <person name="Richardson P."/>
        </authorList>
    </citation>
    <scope>NUCLEOTIDE SEQUENCE [LARGE SCALE GENOMIC DNA]</scope>
    <source>
        <strain>PB1/+</strain>
    </source>
</reference>
<proteinExistence type="inferred from homology"/>
<accession>B2K906</accession>
<sequence>MTTYALVGDVGGTNARLALCAVATGEILQAKTYSGLEYESLEDVIKQYLSEHQAKVTDACIAIACPITGDWVAMTNHTWAFSIAAMQQNLGLDHLEVINDFTAVSMAIPVLPAQDVLQFGGTQPQPGKPVAVYGAGTGLGVAHLVNVDRRWISLAGEGGHVDFAPNSEEEDQILAVLRQELGHVSAERVLSGPGLVNLYRAIVISDARLPEKLAPKDITARALADSCTDCRRALSLFCVIMGRFGGNLALNLSTFGGVYIAGGIVPRFMEFFKASGFRAAFEDKGRFKDFLQDIPVYMITHPQPGLLGAGAYLRQKLGYELSS</sequence>